<keyword id="KW-0998">Cell outer membrane</keyword>
<keyword id="KW-0134">Cell wall</keyword>
<keyword id="KW-0903">Direct protein sequencing</keyword>
<keyword id="KW-0406">Ion transport</keyword>
<keyword id="KW-0472">Membrane</keyword>
<keyword id="KW-0626">Porin</keyword>
<keyword id="KW-1185">Reference proteome</keyword>
<keyword id="KW-0964">Secreted</keyword>
<keyword id="KW-0732">Signal</keyword>
<keyword id="KW-0812">Transmembrane</keyword>
<keyword id="KW-1134">Transmembrane beta strand</keyword>
<keyword id="KW-0813">Transport</keyword>
<sequence>MKAISRVLIAMISALAAAVAGLFVSAGTSHAGLDNELSLVDGQDRTLTVQQWDTFLNGVFPLDRNRLTREWFHSGRAKYIVAGPGADEFEGTLELGYQIGFPWSLGVGINFSYTTPNILIDDGDITGPPFGLESVITPNLFPGVSISADLGNGPGIQEVATFSVDVSGPAGGVAVSNAHGTVTGAAGGVLLRPFARLIASTGDSVTTYGEPWNMN</sequence>
<accession>A0R3I3</accession>
<accession>I7FSE8</accession>
<accession>Q934G2</accession>
<dbReference type="EMBL" id="AJ299735">
    <property type="protein sequence ID" value="CAC82509.1"/>
    <property type="molecule type" value="Genomic_DNA"/>
</dbReference>
<dbReference type="EMBL" id="CP000480">
    <property type="protein sequence ID" value="ABK74976.1"/>
    <property type="molecule type" value="Genomic_DNA"/>
</dbReference>
<dbReference type="EMBL" id="CP001663">
    <property type="protein sequence ID" value="AFP41773.1"/>
    <property type="molecule type" value="Genomic_DNA"/>
</dbReference>
<dbReference type="RefSeq" id="WP_011730563.1">
    <property type="nucleotide sequence ID" value="NZ_SIJM01000006.1"/>
</dbReference>
<dbReference type="RefSeq" id="YP_889721.1">
    <property type="nucleotide sequence ID" value="NC_008596.1"/>
</dbReference>
<dbReference type="SMR" id="A0R3I3"/>
<dbReference type="STRING" id="246196.MSMEG_5483"/>
<dbReference type="PaxDb" id="246196-MSMEI_5332"/>
<dbReference type="KEGG" id="msb:LJ00_27100"/>
<dbReference type="KEGG" id="msg:MSMEI_5332"/>
<dbReference type="KEGG" id="msm:MSMEG_5483"/>
<dbReference type="PATRIC" id="fig|246196.19.peg.5342"/>
<dbReference type="eggNOG" id="ENOG5031B57">
    <property type="taxonomic scope" value="Bacteria"/>
</dbReference>
<dbReference type="OrthoDB" id="4569497at2"/>
<dbReference type="Proteomes" id="UP000000757">
    <property type="component" value="Chromosome"/>
</dbReference>
<dbReference type="Proteomes" id="UP000006158">
    <property type="component" value="Chromosome"/>
</dbReference>
<dbReference type="GO" id="GO:0009279">
    <property type="term" value="C:cell outer membrane"/>
    <property type="evidence" value="ECO:0007669"/>
    <property type="project" value="UniProtKB-SubCell"/>
</dbReference>
<dbReference type="GO" id="GO:0005576">
    <property type="term" value="C:extracellular region"/>
    <property type="evidence" value="ECO:0007669"/>
    <property type="project" value="UniProtKB-KW"/>
</dbReference>
<dbReference type="GO" id="GO:0046930">
    <property type="term" value="C:pore complex"/>
    <property type="evidence" value="ECO:0007669"/>
    <property type="project" value="UniProtKB-KW"/>
</dbReference>
<dbReference type="GO" id="GO:0015288">
    <property type="term" value="F:porin activity"/>
    <property type="evidence" value="ECO:0007669"/>
    <property type="project" value="UniProtKB-KW"/>
</dbReference>
<dbReference type="GO" id="GO:0006811">
    <property type="term" value="P:monoatomic ion transport"/>
    <property type="evidence" value="ECO:0007669"/>
    <property type="project" value="UniProtKB-KW"/>
</dbReference>
<dbReference type="Gene3D" id="2.60.40.1650">
    <property type="entry name" value="Porin MspA (Ig-like beta-sandwich domain)"/>
    <property type="match status" value="1"/>
</dbReference>
<dbReference type="Gene3D" id="2.10.300.10">
    <property type="entry name" value="Porin MspA ribbon domain"/>
    <property type="match status" value="1"/>
</dbReference>
<dbReference type="InterPro" id="IPR036435">
    <property type="entry name" value="Leukocidin/porin_MspA_sf"/>
</dbReference>
<dbReference type="InterPro" id="IPR015286">
    <property type="entry name" value="Porin_fam_mycobact-type"/>
</dbReference>
<dbReference type="Pfam" id="PF09203">
    <property type="entry name" value="MspA"/>
    <property type="match status" value="1"/>
</dbReference>
<dbReference type="SUPFAM" id="SSF56959">
    <property type="entry name" value="Leukocidin-like"/>
    <property type="match status" value="1"/>
</dbReference>
<proteinExistence type="evidence at protein level"/>
<comment type="function">
    <text evidence="2 3 4">A constitutively expressed secondary porin, forms a water-filled channel which favors the permeation of cations and less efficiently phosphate. There are about 2400 porins in wild-type, 800 in an mspA deletion and 150 in a double mspA-mspC deletion.</text>
</comment>
<comment type="subunit">
    <text evidence="1">Octamers. Probably forms a goblet with the wide end on the exterior of the outer membrane and a central channel. It is not known if mixed oligomers of MspC with other Msp subunits form in vivo (By similarity).</text>
</comment>
<comment type="subcellular location">
    <subcellularLocation>
        <location evidence="1">Cell outer membrane</location>
    </subcellularLocation>
    <subcellularLocation>
        <location evidence="2">Secreted</location>
        <location evidence="2">Cell wall</location>
    </subcellularLocation>
</comment>
<comment type="induction">
    <text evidence="3">Constitutely expressed.</text>
</comment>
<comment type="mass spectrometry"/>
<comment type="disruption phenotype">
    <text evidence="3 4">Single deletion is viable, and shows no effects on glucose uptake. A double mspA-mspC deletion takes up less of the antibiotic cephaloridine, glucose, serine and phosphate than the single mspA deletion and grows slower than wt or single mspA deletion. A triple mspA-mspC-mspD deletion grows even slower and has reduced Fe(3+) transport compared to wild-type.</text>
</comment>
<comment type="similarity">
    <text evidence="5">Belongs to the mycobacterial porin (TC 1.B.24) family.</text>
</comment>
<comment type="caution">
    <text evidence="5">It is not clear if the data in PubMed:11309127 refer to MspB or MspC as they are nearly identical.</text>
</comment>
<organism>
    <name type="scientific">Mycolicibacterium smegmatis (strain ATCC 700084 / mc(2)155)</name>
    <name type="common">Mycobacterium smegmatis</name>
    <dbReference type="NCBI Taxonomy" id="246196"/>
    <lineage>
        <taxon>Bacteria</taxon>
        <taxon>Bacillati</taxon>
        <taxon>Actinomycetota</taxon>
        <taxon>Actinomycetes</taxon>
        <taxon>Mycobacteriales</taxon>
        <taxon>Mycobacteriaceae</taxon>
        <taxon>Mycolicibacterium</taxon>
    </lineage>
</organism>
<gene>
    <name type="primary">mspC</name>
    <name type="ordered locus">MSMEG_5483</name>
    <name type="ordered locus">MSMEI_5332</name>
</gene>
<reference key="1">
    <citation type="journal article" date="2001" name="Mol. Microbiol.">
        <title>MspA provides the main hydrophilic pathway through the cell wall of Mycobacterium smegmatis.</title>
        <authorList>
            <person name="Stahl C."/>
            <person name="Kubetzko S."/>
            <person name="Kaps I."/>
            <person name="Seeber S."/>
            <person name="Engelhardt H."/>
            <person name="Niederweis M."/>
        </authorList>
    </citation>
    <scope>NUCLEOTIDE SEQUENCE [GENOMIC DNA]</scope>
    <scope>PROTEIN SEQUENCE OF 32-51 AND 210-214</scope>
    <scope>FUNCTION AS A PORIN</scope>
    <scope>MASS SPECTROMETRY</scope>
    <scope>SUBCELLULAR LOCATION IN CELL WALL</scope>
    <source>
        <strain>ATCC 700084 / mc(2)155</strain>
    </source>
</reference>
<reference key="2">
    <citation type="submission" date="2006-10" db="EMBL/GenBank/DDBJ databases">
        <authorList>
            <person name="Fleischmann R.D."/>
            <person name="Dodson R.J."/>
            <person name="Haft D.H."/>
            <person name="Merkel J.S."/>
            <person name="Nelson W.C."/>
            <person name="Fraser C.M."/>
        </authorList>
    </citation>
    <scope>NUCLEOTIDE SEQUENCE [LARGE SCALE GENOMIC DNA]</scope>
    <source>
        <strain>ATCC 700084 / mc(2)155</strain>
    </source>
</reference>
<reference key="3">
    <citation type="journal article" date="2007" name="Genome Biol.">
        <title>Interrupted coding sequences in Mycobacterium smegmatis: authentic mutations or sequencing errors?</title>
        <authorList>
            <person name="Deshayes C."/>
            <person name="Perrodou E."/>
            <person name="Gallien S."/>
            <person name="Euphrasie D."/>
            <person name="Schaeffer C."/>
            <person name="Van-Dorsselaer A."/>
            <person name="Poch O."/>
            <person name="Lecompte O."/>
            <person name="Reyrat J.-M."/>
        </authorList>
    </citation>
    <scope>NUCLEOTIDE SEQUENCE [LARGE SCALE GENOMIC DNA]</scope>
    <source>
        <strain>ATCC 700084 / mc(2)155</strain>
    </source>
</reference>
<reference key="4">
    <citation type="journal article" date="2009" name="Genome Res.">
        <title>Ortho-proteogenomics: multiple proteomes investigation through orthology and a new MS-based protocol.</title>
        <authorList>
            <person name="Gallien S."/>
            <person name="Perrodou E."/>
            <person name="Carapito C."/>
            <person name="Deshayes C."/>
            <person name="Reyrat J.-M."/>
            <person name="Van Dorsselaer A."/>
            <person name="Poch O."/>
            <person name="Schaeffer C."/>
            <person name="Lecompte O."/>
        </authorList>
    </citation>
    <scope>NUCLEOTIDE SEQUENCE [LARGE SCALE GENOMIC DNA]</scope>
    <source>
        <strain>ATCC 700084 / mc(2)155</strain>
    </source>
</reference>
<reference key="5">
    <citation type="journal article" date="2005" name="Mol. Microbiol.">
        <title>The growth rate of Mycobacterium smegmatis depends on sufficient porin-mediated influx of nutrients.</title>
        <authorList>
            <person name="Stephan J."/>
            <person name="Bender J."/>
            <person name="Wolschendorf F."/>
            <person name="Hoffmann C."/>
            <person name="Roth E."/>
            <person name="Mailander C."/>
            <person name="Engelhardt H."/>
            <person name="Niederweis M."/>
        </authorList>
    </citation>
    <scope>FUNCTION AS A PORIN</scope>
    <scope>INDUCTION</scope>
    <scope>DISRUPTION PHENOTYPE</scope>
    <source>
        <strain>ATCC 700084 / mc(2)155</strain>
    </source>
</reference>
<reference key="6">
    <citation type="journal article" date="2007" name="J. Bacteriol.">
        <title>Porins are required for uptake of phosphates by Mycobacterium smegmatis.</title>
        <authorList>
            <person name="Wolschendorf F."/>
            <person name="Mahfoud M."/>
            <person name="Niederweis M."/>
        </authorList>
    </citation>
    <scope>ROLE IN PHOSPHATE UPTAKE</scope>
    <scope>DISRUPTION PHENOTYPE</scope>
    <source>
        <strain>ATCC 700084 / mc(2)155</strain>
    </source>
</reference>
<evidence type="ECO:0000250" key="1"/>
<evidence type="ECO:0000269" key="2">
    <source>
    </source>
</evidence>
<evidence type="ECO:0000269" key="3">
    <source>
    </source>
</evidence>
<evidence type="ECO:0000269" key="4">
    <source>
    </source>
</evidence>
<evidence type="ECO:0000305" key="5"/>
<evidence type="ECO:0000305" key="6">
    <source>
    </source>
</evidence>
<protein>
    <recommendedName>
        <fullName>Porin MspC</fullName>
    </recommendedName>
</protein>
<feature type="signal peptide" evidence="6">
    <location>
        <begin position="1"/>
        <end position="31"/>
    </location>
</feature>
<feature type="chain" id="PRO_5000066783" description="Porin MspC">
    <location>
        <begin position="32"/>
        <end position="215"/>
    </location>
</feature>
<name>MSPC_MYCS2</name>